<gene>
    <name type="primary">Testin</name>
</gene>
<evidence type="ECO:0000250" key="1"/>
<evidence type="ECO:0000255" key="2"/>
<evidence type="ECO:0000255" key="3">
    <source>
        <dbReference type="PROSITE-ProRule" id="PRU10089"/>
    </source>
</evidence>
<evidence type="ECO:0000255" key="4">
    <source>
        <dbReference type="PROSITE-ProRule" id="PRU10090"/>
    </source>
</evidence>
<evidence type="ECO:0000269" key="5">
    <source>
    </source>
</evidence>
<evidence type="ECO:0000305" key="6"/>
<keyword id="KW-0903">Direct protein sequencing</keyword>
<keyword id="KW-1015">Disulfide bond</keyword>
<keyword id="KW-0325">Glycoprotein</keyword>
<keyword id="KW-1185">Reference proteome</keyword>
<keyword id="KW-0964">Secreted</keyword>
<keyword id="KW-0732">Signal</keyword>
<feature type="signal peptide" evidence="5">
    <location>
        <begin position="1"/>
        <end position="17"/>
    </location>
</feature>
<feature type="chain" id="PRO_0000026291" description="Testin-2">
    <location>
        <begin position="18"/>
        <end position="333"/>
    </location>
</feature>
<feature type="chain" id="PRO_0000026292" description="Testin-1">
    <location>
        <begin position="20"/>
        <end position="333"/>
    </location>
</feature>
<feature type="active site" evidence="1">
    <location>
        <position position="276"/>
    </location>
</feature>
<feature type="active site" evidence="1">
    <location>
        <position position="300"/>
    </location>
</feature>
<feature type="site" description="Ancestral active site">
    <location>
        <position position="138"/>
    </location>
</feature>
<feature type="glycosylation site" description="N-linked (GlcNAc...) asparagine" evidence="2">
    <location>
        <position position="173"/>
    </location>
</feature>
<feature type="disulfide bond" evidence="1">
    <location>
        <begin position="135"/>
        <end position="178"/>
    </location>
</feature>
<feature type="disulfide bond" evidence="1">
    <location>
        <begin position="169"/>
        <end position="211"/>
    </location>
</feature>
<feature type="disulfide bond" evidence="1">
    <location>
        <begin position="269"/>
        <end position="322"/>
    </location>
</feature>
<dbReference type="EMBL" id="U16858">
    <property type="protein sequence ID" value="AAC52162.1"/>
    <property type="molecule type" value="mRNA"/>
</dbReference>
<dbReference type="PIR" id="I52525">
    <property type="entry name" value="I52525"/>
</dbReference>
<dbReference type="PIR" id="PC1251">
    <property type="entry name" value="PC1251"/>
</dbReference>
<dbReference type="RefSeq" id="NP_775155.1">
    <property type="nucleotide sequence ID" value="NM_173132.2"/>
</dbReference>
<dbReference type="RefSeq" id="XP_008769650.1">
    <property type="nucleotide sequence ID" value="XM_008771428.2"/>
</dbReference>
<dbReference type="RefSeq" id="XP_038951362.1">
    <property type="nucleotide sequence ID" value="XM_039095434.2"/>
</dbReference>
<dbReference type="SMR" id="P15242"/>
<dbReference type="FunCoup" id="P15242">
    <property type="interactions" value="208"/>
</dbReference>
<dbReference type="STRING" id="10116.ENSRNOP00000024467"/>
<dbReference type="MEROPS" id="C01.972"/>
<dbReference type="GlyCosmos" id="P15242">
    <property type="glycosylation" value="1 site, No reported glycans"/>
</dbReference>
<dbReference type="GlyGen" id="P15242">
    <property type="glycosylation" value="2 sites"/>
</dbReference>
<dbReference type="PaxDb" id="10116-ENSRNOP00000024467"/>
<dbReference type="Ensembl" id="ENSRNOT00000024467.3">
    <property type="protein sequence ID" value="ENSRNOP00000024467.1"/>
    <property type="gene ID" value="ENSRNOG00000018028.3"/>
</dbReference>
<dbReference type="GeneID" id="286916"/>
<dbReference type="KEGG" id="rno:286916"/>
<dbReference type="UCSC" id="RGD:708447">
    <property type="organism name" value="rat"/>
</dbReference>
<dbReference type="AGR" id="RGD:708447"/>
<dbReference type="CTD" id="286916"/>
<dbReference type="RGD" id="708447">
    <property type="gene designation" value="Testin"/>
</dbReference>
<dbReference type="eggNOG" id="KOG1543">
    <property type="taxonomic scope" value="Eukaryota"/>
</dbReference>
<dbReference type="GeneTree" id="ENSGT00940000153321"/>
<dbReference type="HOGENOM" id="CLU_012184_1_2_1"/>
<dbReference type="InParanoid" id="P15242"/>
<dbReference type="OMA" id="LHNWEYL"/>
<dbReference type="OrthoDB" id="9544747at2759"/>
<dbReference type="PhylomeDB" id="P15242"/>
<dbReference type="TreeFam" id="TF313739"/>
<dbReference type="PRO" id="PR:P15242"/>
<dbReference type="Proteomes" id="UP000002494">
    <property type="component" value="Chromosome 17"/>
</dbReference>
<dbReference type="Bgee" id="ENSRNOG00000018028">
    <property type="expression patterns" value="Expressed in ovary and 6 other cell types or tissues"/>
</dbReference>
<dbReference type="GO" id="GO:0030054">
    <property type="term" value="C:cell junction"/>
    <property type="evidence" value="ECO:0000314"/>
    <property type="project" value="RGD"/>
</dbReference>
<dbReference type="GO" id="GO:0005615">
    <property type="term" value="C:extracellular space"/>
    <property type="evidence" value="ECO:0000318"/>
    <property type="project" value="GO_Central"/>
</dbReference>
<dbReference type="GO" id="GO:0005764">
    <property type="term" value="C:lysosome"/>
    <property type="evidence" value="ECO:0000318"/>
    <property type="project" value="GO_Central"/>
</dbReference>
<dbReference type="GO" id="GO:0004197">
    <property type="term" value="F:cysteine-type endopeptidase activity"/>
    <property type="evidence" value="ECO:0000318"/>
    <property type="project" value="GO_Central"/>
</dbReference>
<dbReference type="GO" id="GO:0051603">
    <property type="term" value="P:proteolysis involved in protein catabolic process"/>
    <property type="evidence" value="ECO:0000318"/>
    <property type="project" value="GO_Central"/>
</dbReference>
<dbReference type="CDD" id="cd02248">
    <property type="entry name" value="Peptidase_C1A"/>
    <property type="match status" value="1"/>
</dbReference>
<dbReference type="FunFam" id="3.90.70.10:FF:000332">
    <property type="entry name" value="Cathepsin L1"/>
    <property type="match status" value="1"/>
</dbReference>
<dbReference type="Gene3D" id="3.90.70.10">
    <property type="entry name" value="Cysteine proteinases"/>
    <property type="match status" value="1"/>
</dbReference>
<dbReference type="InterPro" id="IPR038765">
    <property type="entry name" value="Papain-like_cys_pep_sf"/>
</dbReference>
<dbReference type="InterPro" id="IPR025661">
    <property type="entry name" value="Pept_asp_AS"/>
</dbReference>
<dbReference type="InterPro" id="IPR025660">
    <property type="entry name" value="Pept_his_AS"/>
</dbReference>
<dbReference type="InterPro" id="IPR013128">
    <property type="entry name" value="Peptidase_C1A"/>
</dbReference>
<dbReference type="InterPro" id="IPR000668">
    <property type="entry name" value="Peptidase_C1A_C"/>
</dbReference>
<dbReference type="InterPro" id="IPR039417">
    <property type="entry name" value="Peptidase_C1A_papain-like"/>
</dbReference>
<dbReference type="InterPro" id="IPR013201">
    <property type="entry name" value="Prot_inhib_I29"/>
</dbReference>
<dbReference type="PANTHER" id="PTHR12411">
    <property type="entry name" value="CYSTEINE PROTEASE FAMILY C1-RELATED"/>
    <property type="match status" value="1"/>
</dbReference>
<dbReference type="Pfam" id="PF08246">
    <property type="entry name" value="Inhibitor_I29"/>
    <property type="match status" value="1"/>
</dbReference>
<dbReference type="Pfam" id="PF00112">
    <property type="entry name" value="Peptidase_C1"/>
    <property type="match status" value="1"/>
</dbReference>
<dbReference type="PRINTS" id="PR00705">
    <property type="entry name" value="PAPAIN"/>
</dbReference>
<dbReference type="SMART" id="SM00848">
    <property type="entry name" value="Inhibitor_I29"/>
    <property type="match status" value="1"/>
</dbReference>
<dbReference type="SMART" id="SM00645">
    <property type="entry name" value="Pept_C1"/>
    <property type="match status" value="1"/>
</dbReference>
<dbReference type="SUPFAM" id="SSF54001">
    <property type="entry name" value="Cysteine proteinases"/>
    <property type="match status" value="1"/>
</dbReference>
<dbReference type="PROSITE" id="PS00640">
    <property type="entry name" value="THIOL_PROTEASE_ASN"/>
    <property type="match status" value="1"/>
</dbReference>
<dbReference type="PROSITE" id="PS00639">
    <property type="entry name" value="THIOL_PROTEASE_HIS"/>
    <property type="match status" value="1"/>
</dbReference>
<accession>P15242</accession>
<accession>P15243</accession>
<reference key="1">
    <citation type="journal article" date="1995" name="Biol. Reprod.">
        <title>Rat testin is a newly identified component of the junctional complexes in various tissues whose mRNA is predominantly expressed in the testis and ovary.</title>
        <authorList>
            <person name="Grima J."/>
            <person name="Zhu L."/>
            <person name="Zong S.D."/>
            <person name="Catterall J.F."/>
            <person name="Bardin C.W."/>
            <person name="Cheng C.Y."/>
        </authorList>
    </citation>
    <scope>NUCLEOTIDE SEQUENCE [MRNA]</scope>
    <source>
        <tissue>Testis</tissue>
    </source>
</reference>
<reference key="2">
    <citation type="journal article" date="1989" name="J. Biol. Chem.">
        <title>Testins are structurally related Sertoli cell proteins whose secretion is tightly coupled to the presence of germ cells.</title>
        <authorList>
            <person name="Cheng C.Y."/>
            <person name="Grima J."/>
            <person name="Stahler M.S."/>
            <person name="Lockshin R.A."/>
        </authorList>
    </citation>
    <scope>PROTEIN SEQUENCE OF 18-49</scope>
    <source>
        <strain>Sprague-Dawley</strain>
        <tissue>Sertoli cell</tissue>
    </source>
</reference>
<reference key="3">
    <citation type="journal article" date="1993" name="Biochem. Biophys. Res. Commun.">
        <title>Testins are structurally related to the mouse cysteine proteinase precursor but devoid of any protease/anti-protease activity.</title>
        <authorList>
            <person name="Cheng C.Y."/>
            <person name="Morris I."/>
            <person name="Bardin C.W."/>
        </authorList>
    </citation>
    <scope>LACK OF PROTEASE ACTIVITY</scope>
</reference>
<sequence>MIAVLFLAILCLEVDSTAPTPDPSLDVEWNEWRTKHGKTYNMNEERLKRAVWEKNFKMIELHNWEYLEGRHDFTMAMNAFGDLTNIEFVKMMTGFQRQKIKKTHIFQDHQFLYVPKRVDWRQLGYVTPVKNQGHCASSWAFSATGSLEGQMFRKTERLIPLSEQNLLDCMGSNVTHGCSGGFMQYAFQYVKDNGGLATEESYPYRGQGRECRYHAENSAANVRDFVQIPGSEEALMKAVAKVGPISVAVDASHGSFQFYGSGIYYEPQCKRVHLNHAVLVVGYGFEGEESDGNSFWLVKNSWGEEWGMKGYMKLAKDWSNHCGIATYSTYPIV</sequence>
<protein>
    <recommendedName>
        <fullName>Testin-2</fullName>
    </recommendedName>
    <alternativeName>
        <fullName>CMB-23</fullName>
    </alternativeName>
    <component>
        <recommendedName>
            <fullName>Testin-1</fullName>
        </recommendedName>
        <alternativeName>
            <fullName>CMB-22</fullName>
        </alternativeName>
    </component>
</protein>
<name>TEST2_RAT</name>
<organism>
    <name type="scientific">Rattus norvegicus</name>
    <name type="common">Rat</name>
    <dbReference type="NCBI Taxonomy" id="10116"/>
    <lineage>
        <taxon>Eukaryota</taxon>
        <taxon>Metazoa</taxon>
        <taxon>Chordata</taxon>
        <taxon>Craniata</taxon>
        <taxon>Vertebrata</taxon>
        <taxon>Euteleostomi</taxon>
        <taxon>Mammalia</taxon>
        <taxon>Eutheria</taxon>
        <taxon>Euarchontoglires</taxon>
        <taxon>Glires</taxon>
        <taxon>Rodentia</taxon>
        <taxon>Myomorpha</taxon>
        <taxon>Muroidea</taxon>
        <taxon>Muridae</taxon>
        <taxon>Murinae</taxon>
        <taxon>Rattus</taxon>
    </lineage>
</organism>
<proteinExistence type="evidence at protein level"/>
<comment type="subcellular location">
    <subcellularLocation>
        <location>Secreted</location>
    </subcellularLocation>
</comment>
<comment type="tissue specificity">
    <text>Sertoli cells.</text>
</comment>
<comment type="similarity">
    <text evidence="3 4">Belongs to the peptidase C1 family.</text>
</comment>
<comment type="caution">
    <text evidence="6">This protein is distinct from Tes/Testin which is a LIM domain protein.</text>
</comment>